<dbReference type="EMBL" id="Z93937">
    <property type="protein sequence ID" value="CAB07935.1"/>
    <property type="molecule type" value="Genomic_DNA"/>
</dbReference>
<dbReference type="EMBL" id="AL009126">
    <property type="protein sequence ID" value="CAB15142.1"/>
    <property type="molecule type" value="Genomic_DNA"/>
</dbReference>
<dbReference type="PIR" id="B70009">
    <property type="entry name" value="B70009"/>
</dbReference>
<dbReference type="RefSeq" id="WP_009968074.1">
    <property type="nucleotide sequence ID" value="NZ_OZ025638.1"/>
</dbReference>
<dbReference type="SMR" id="O05251"/>
<dbReference type="FunCoup" id="O05251">
    <property type="interactions" value="175"/>
</dbReference>
<dbReference type="STRING" id="224308.BSU31530"/>
<dbReference type="jPOST" id="O05251"/>
<dbReference type="PaxDb" id="224308-BSU31530"/>
<dbReference type="EnsemblBacteria" id="CAB15142">
    <property type="protein sequence ID" value="CAB15142"/>
    <property type="gene ID" value="BSU_31530"/>
</dbReference>
<dbReference type="GeneID" id="937174"/>
<dbReference type="KEGG" id="bsu:BSU31530"/>
<dbReference type="PATRIC" id="fig|224308.179.peg.3418"/>
<dbReference type="eggNOG" id="COG4565">
    <property type="taxonomic scope" value="Bacteria"/>
</dbReference>
<dbReference type="InParanoid" id="O05251"/>
<dbReference type="OrthoDB" id="9759232at2"/>
<dbReference type="PhylomeDB" id="O05251"/>
<dbReference type="BioCyc" id="BSUB:BSU31530-MONOMER"/>
<dbReference type="Proteomes" id="UP000001570">
    <property type="component" value="Chromosome"/>
</dbReference>
<dbReference type="GO" id="GO:0005737">
    <property type="term" value="C:cytoplasm"/>
    <property type="evidence" value="ECO:0007669"/>
    <property type="project" value="UniProtKB-SubCell"/>
</dbReference>
<dbReference type="GO" id="GO:0003677">
    <property type="term" value="F:DNA binding"/>
    <property type="evidence" value="ECO:0007669"/>
    <property type="project" value="UniProtKB-KW"/>
</dbReference>
<dbReference type="GO" id="GO:0003700">
    <property type="term" value="F:DNA-binding transcription factor activity"/>
    <property type="evidence" value="ECO:0007669"/>
    <property type="project" value="InterPro"/>
</dbReference>
<dbReference type="GO" id="GO:0000156">
    <property type="term" value="F:phosphorelay response regulator activity"/>
    <property type="evidence" value="ECO:0000318"/>
    <property type="project" value="GO_Central"/>
</dbReference>
<dbReference type="CDD" id="cd19925">
    <property type="entry name" value="REC_citrate_TCS"/>
    <property type="match status" value="1"/>
</dbReference>
<dbReference type="Gene3D" id="3.40.50.2300">
    <property type="match status" value="1"/>
</dbReference>
<dbReference type="InterPro" id="IPR051271">
    <property type="entry name" value="2C-system_Tx_regulators"/>
</dbReference>
<dbReference type="InterPro" id="IPR011006">
    <property type="entry name" value="CheY-like_superfamily"/>
</dbReference>
<dbReference type="InterPro" id="IPR024187">
    <property type="entry name" value="Sig_transdc_resp-reg_cit/mal"/>
</dbReference>
<dbReference type="InterPro" id="IPR001789">
    <property type="entry name" value="Sig_transdc_resp-reg_receiver"/>
</dbReference>
<dbReference type="PANTHER" id="PTHR45526:SF1">
    <property type="entry name" value="TRANSCRIPTIONAL REGULATORY PROTEIN DCUR-RELATED"/>
    <property type="match status" value="1"/>
</dbReference>
<dbReference type="PANTHER" id="PTHR45526">
    <property type="entry name" value="TRANSCRIPTIONAL REGULATORY PROTEIN DPIA"/>
    <property type="match status" value="1"/>
</dbReference>
<dbReference type="Pfam" id="PF00072">
    <property type="entry name" value="Response_reg"/>
    <property type="match status" value="1"/>
</dbReference>
<dbReference type="PIRSF" id="PIRSF006171">
    <property type="entry name" value="RR_citrat_malat"/>
    <property type="match status" value="1"/>
</dbReference>
<dbReference type="SMART" id="SM00448">
    <property type="entry name" value="REC"/>
    <property type="match status" value="1"/>
</dbReference>
<dbReference type="SUPFAM" id="SSF52172">
    <property type="entry name" value="CheY-like"/>
    <property type="match status" value="1"/>
</dbReference>
<dbReference type="PROSITE" id="PS50110">
    <property type="entry name" value="RESPONSE_REGULATORY"/>
    <property type="match status" value="1"/>
</dbReference>
<accession>O05251</accession>
<accession>Q795M2</accession>
<reference key="1">
    <citation type="journal article" date="1997" name="Microbiology">
        <title>Analysis of the Bacillus subtilis genome: cloning and nucleotide sequence of a 62 kb region between 275 degrees (rrnB) and 284 degrees (pai).</title>
        <authorList>
            <person name="Oudega B."/>
            <person name="Koningstein G."/>
            <person name="Rodrigues L."/>
            <person name="de Sales Ramon M."/>
            <person name="Hilbert H."/>
            <person name="Duesterhoeft A."/>
            <person name="Pohl T.M."/>
            <person name="Weitzenegger T."/>
        </authorList>
    </citation>
    <scope>NUCLEOTIDE SEQUENCE [GENOMIC DNA]</scope>
    <source>
        <strain>168</strain>
    </source>
</reference>
<reference key="2">
    <citation type="journal article" date="1997" name="Nature">
        <title>The complete genome sequence of the Gram-positive bacterium Bacillus subtilis.</title>
        <authorList>
            <person name="Kunst F."/>
            <person name="Ogasawara N."/>
            <person name="Moszer I."/>
            <person name="Albertini A.M."/>
            <person name="Alloni G."/>
            <person name="Azevedo V."/>
            <person name="Bertero M.G."/>
            <person name="Bessieres P."/>
            <person name="Bolotin A."/>
            <person name="Borchert S."/>
            <person name="Borriss R."/>
            <person name="Boursier L."/>
            <person name="Brans A."/>
            <person name="Braun M."/>
            <person name="Brignell S.C."/>
            <person name="Bron S."/>
            <person name="Brouillet S."/>
            <person name="Bruschi C.V."/>
            <person name="Caldwell B."/>
            <person name="Capuano V."/>
            <person name="Carter N.M."/>
            <person name="Choi S.-K."/>
            <person name="Codani J.-J."/>
            <person name="Connerton I.F."/>
            <person name="Cummings N.J."/>
            <person name="Daniel R.A."/>
            <person name="Denizot F."/>
            <person name="Devine K.M."/>
            <person name="Duesterhoeft A."/>
            <person name="Ehrlich S.D."/>
            <person name="Emmerson P.T."/>
            <person name="Entian K.-D."/>
            <person name="Errington J."/>
            <person name="Fabret C."/>
            <person name="Ferrari E."/>
            <person name="Foulger D."/>
            <person name="Fritz C."/>
            <person name="Fujita M."/>
            <person name="Fujita Y."/>
            <person name="Fuma S."/>
            <person name="Galizzi A."/>
            <person name="Galleron N."/>
            <person name="Ghim S.-Y."/>
            <person name="Glaser P."/>
            <person name="Goffeau A."/>
            <person name="Golightly E.J."/>
            <person name="Grandi G."/>
            <person name="Guiseppi G."/>
            <person name="Guy B.J."/>
            <person name="Haga K."/>
            <person name="Haiech J."/>
            <person name="Harwood C.R."/>
            <person name="Henaut A."/>
            <person name="Hilbert H."/>
            <person name="Holsappel S."/>
            <person name="Hosono S."/>
            <person name="Hullo M.-F."/>
            <person name="Itaya M."/>
            <person name="Jones L.-M."/>
            <person name="Joris B."/>
            <person name="Karamata D."/>
            <person name="Kasahara Y."/>
            <person name="Klaerr-Blanchard M."/>
            <person name="Klein C."/>
            <person name="Kobayashi Y."/>
            <person name="Koetter P."/>
            <person name="Koningstein G."/>
            <person name="Krogh S."/>
            <person name="Kumano M."/>
            <person name="Kurita K."/>
            <person name="Lapidus A."/>
            <person name="Lardinois S."/>
            <person name="Lauber J."/>
            <person name="Lazarevic V."/>
            <person name="Lee S.-M."/>
            <person name="Levine A."/>
            <person name="Liu H."/>
            <person name="Masuda S."/>
            <person name="Mauel C."/>
            <person name="Medigue C."/>
            <person name="Medina N."/>
            <person name="Mellado R.P."/>
            <person name="Mizuno M."/>
            <person name="Moestl D."/>
            <person name="Nakai S."/>
            <person name="Noback M."/>
            <person name="Noone D."/>
            <person name="O'Reilly M."/>
            <person name="Ogawa K."/>
            <person name="Ogiwara A."/>
            <person name="Oudega B."/>
            <person name="Park S.-H."/>
            <person name="Parro V."/>
            <person name="Pohl T.M."/>
            <person name="Portetelle D."/>
            <person name="Porwollik S."/>
            <person name="Prescott A.M."/>
            <person name="Presecan E."/>
            <person name="Pujic P."/>
            <person name="Purnelle B."/>
            <person name="Rapoport G."/>
            <person name="Rey M."/>
            <person name="Reynolds S."/>
            <person name="Rieger M."/>
            <person name="Rivolta C."/>
            <person name="Rocha E."/>
            <person name="Roche B."/>
            <person name="Rose M."/>
            <person name="Sadaie Y."/>
            <person name="Sato T."/>
            <person name="Scanlan E."/>
            <person name="Schleich S."/>
            <person name="Schroeter R."/>
            <person name="Scoffone F."/>
            <person name="Sekiguchi J."/>
            <person name="Sekowska A."/>
            <person name="Seror S.J."/>
            <person name="Serror P."/>
            <person name="Shin B.-S."/>
            <person name="Soldo B."/>
            <person name="Sorokin A."/>
            <person name="Tacconi E."/>
            <person name="Takagi T."/>
            <person name="Takahashi H."/>
            <person name="Takemaru K."/>
            <person name="Takeuchi M."/>
            <person name="Tamakoshi A."/>
            <person name="Tanaka T."/>
            <person name="Terpstra P."/>
            <person name="Tognoni A."/>
            <person name="Tosato V."/>
            <person name="Uchiyama S."/>
            <person name="Vandenbol M."/>
            <person name="Vannier F."/>
            <person name="Vassarotti A."/>
            <person name="Viari A."/>
            <person name="Wambutt R."/>
            <person name="Wedler E."/>
            <person name="Wedler H."/>
            <person name="Weitzenegger T."/>
            <person name="Winters P."/>
            <person name="Wipat A."/>
            <person name="Yamamoto H."/>
            <person name="Yamane K."/>
            <person name="Yasumoto K."/>
            <person name="Yata K."/>
            <person name="Yoshida K."/>
            <person name="Yoshikawa H.-F."/>
            <person name="Zumstein E."/>
            <person name="Yoshikawa H."/>
            <person name="Danchin A."/>
        </authorList>
    </citation>
    <scope>NUCLEOTIDE SEQUENCE [LARGE SCALE GENOMIC DNA]</scope>
    <source>
        <strain>168</strain>
    </source>
</reference>
<reference key="3">
    <citation type="journal article" date="2001" name="J. Bacteriol.">
        <title>Comprehensive DNA microarray analysis of Bacillus subtilis two-component regulatory systems.</title>
        <authorList>
            <person name="Kobayashi K."/>
            <person name="Ogura M."/>
            <person name="Yamaguchi H."/>
            <person name="Yoshida K."/>
            <person name="Ogasawara N."/>
            <person name="Tanaka T."/>
            <person name="Fujita Y."/>
        </authorList>
    </citation>
    <scope>FUNCTION</scope>
</reference>
<reference key="4">
    <citation type="journal article" date="2003" name="Microbiology">
        <title>The Bacillus subtilis YufLM two-component system regulates the expression of the malate transporters MaeN (YufR) and YflS, and is essential for utilization of malate in minimal medium.</title>
        <authorList>
            <person name="Tanaka K."/>
            <person name="Kobayashi K."/>
            <person name="Ogasawara N."/>
        </authorList>
    </citation>
    <scope>FUNCTION</scope>
</reference>
<reference key="5">
    <citation type="journal article" date="2003" name="Microbiology">
        <title>The Bacillus subtilis ywkA gene encodes a malic enzyme and its transcription is activated by the YufL/YufM two-component system in response to malate.</title>
        <authorList>
            <person name="Doan T."/>
            <person name="Servant P."/>
            <person name="Tojo S."/>
            <person name="Yamaguchi H."/>
            <person name="Lerondel G."/>
            <person name="Yoshida K."/>
            <person name="Fujita Y."/>
            <person name="Aymerich S."/>
        </authorList>
    </citation>
    <scope>REGULATION OF MAEA</scope>
</reference>
<comment type="function">
    <text evidence="3 4">Member of a two-component regulatory system MalK/MalR. Activates transcription of maeA, maeN and yflS in presence of malate by binding to their promoter region.</text>
</comment>
<comment type="subcellular location">
    <subcellularLocation>
        <location evidence="5">Cytoplasm</location>
    </subcellularLocation>
</comment>
<comment type="PTM">
    <text evidence="5">Phosphorylated and activated by MalK.</text>
</comment>
<feature type="chain" id="PRO_0000081138" description="Transcriptional regulatory protein MalR">
    <location>
        <begin position="1"/>
        <end position="235"/>
    </location>
</feature>
<feature type="domain" description="Response regulatory" evidence="2">
    <location>
        <begin position="3"/>
        <end position="119"/>
    </location>
</feature>
<feature type="DNA-binding region" description="H-T-H motif" evidence="1">
    <location>
        <begin position="178"/>
        <end position="197"/>
    </location>
</feature>
<feature type="modified residue" description="4-aspartylphosphate" evidence="2">
    <location>
        <position position="54"/>
    </location>
</feature>
<organism>
    <name type="scientific">Bacillus subtilis (strain 168)</name>
    <dbReference type="NCBI Taxonomy" id="224308"/>
    <lineage>
        <taxon>Bacteria</taxon>
        <taxon>Bacillati</taxon>
        <taxon>Bacillota</taxon>
        <taxon>Bacilli</taxon>
        <taxon>Bacillales</taxon>
        <taxon>Bacillaceae</taxon>
        <taxon>Bacillus</taxon>
    </lineage>
</organism>
<evidence type="ECO:0000250" key="1"/>
<evidence type="ECO:0000255" key="2">
    <source>
        <dbReference type="PROSITE-ProRule" id="PRU00169"/>
    </source>
</evidence>
<evidence type="ECO:0000269" key="3">
    <source>
    </source>
</evidence>
<evidence type="ECO:0000269" key="4">
    <source>
    </source>
</evidence>
<evidence type="ECO:0000305" key="5"/>
<sequence>MINVLIVEDDPMVGELNKRYLSQIDGFQLKGIASSFQSALHILGEHHIDLILLDIYMPGKNGLELLTELRAQNEAVDVIVISAASELDVIKKTLRYGAVDYLIKPFEFERFQTALSDYRRKQKVYSTHRNMSQKELDAELFQKKEATEKVQLPKGLTKSTLKLIWSSIQSFENESFTTEDLAKHTEISQVSIRKYLKFLEDIQVLNVEMAYGTIGRPVFQYNVNNSNINGIKQYL</sequence>
<name>MALR_BACSU</name>
<protein>
    <recommendedName>
        <fullName>Transcriptional regulatory protein MalR</fullName>
    </recommendedName>
    <alternativeName>
        <fullName>Malate response regulator</fullName>
    </alternativeName>
</protein>
<gene>
    <name type="primary">malR</name>
    <name type="synonym">yufM</name>
    <name type="ordered locus">BSU31530</name>
</gene>
<keyword id="KW-0010">Activator</keyword>
<keyword id="KW-0963">Cytoplasm</keyword>
<keyword id="KW-0238">DNA-binding</keyword>
<keyword id="KW-0597">Phosphoprotein</keyword>
<keyword id="KW-1185">Reference proteome</keyword>
<keyword id="KW-0804">Transcription</keyword>
<keyword id="KW-0805">Transcription regulation</keyword>
<keyword id="KW-0902">Two-component regulatory system</keyword>
<proteinExistence type="inferred from homology"/>